<protein>
    <recommendedName>
        <fullName>Tubulin alpha-1B chain</fullName>
        <ecNumber evidence="3">3.6.5.-</ecNumber>
    </recommendedName>
    <alternativeName>
        <fullName>Alpha-tubulin ubiquitous</fullName>
    </alternativeName>
    <alternativeName>
        <fullName>Tubulin K-alpha-1</fullName>
    </alternativeName>
    <alternativeName>
        <fullName>Tubulin alpha-ubiquitous chain</fullName>
    </alternativeName>
    <component>
        <recommendedName>
            <fullName>Detyrosinated tubulin alpha-1B chain</fullName>
        </recommendedName>
    </component>
</protein>
<accession>Q5R1W4</accession>
<sequence length="451" mass="50136">MRECISIHVGQAGVQIGNACWELYCLEHGIQPDGQMPSDKTIGGGDDSFNTFFSETGAGKHVPRAVFVDLEPTVIDEVRTGTYRQLFHPEQLITGKEDAANNYARGHYTIGKEIIDLVLDRIRKLADQCTGLQGFLVFHSFGGGTGSGFTSLLMERLSVDYGKKSKLEFSIYPAPQVSTAVVEPYNSILTTHTTLEHSDCAFMVDNEAIYDICRRNLDIERPTYTNLNRLISQIVSSITASLRFDGALNVDLTEFQTNLVPYPRIHFPLATYAPVISAEKAYHEQLSVAEITNACFEPANQMVKCDPRHGKYMACCLLYRGDVVPKDVNAAIATIKTKRSIQFVDWCPTGFKVGINYQPPTVVPGGDLAKVQRAVCMLSNTTAIAEAWARLDHKFVLMYAKRAFVHWYVGEGMEEGEFSEAREDMAALEKDYEEVGVDSVEGEGEEEGEEY</sequence>
<organism>
    <name type="scientific">Pan troglodytes</name>
    <name type="common">Chimpanzee</name>
    <dbReference type="NCBI Taxonomy" id="9598"/>
    <lineage>
        <taxon>Eukaryota</taxon>
        <taxon>Metazoa</taxon>
        <taxon>Chordata</taxon>
        <taxon>Craniata</taxon>
        <taxon>Vertebrata</taxon>
        <taxon>Euteleostomi</taxon>
        <taxon>Mammalia</taxon>
        <taxon>Eutheria</taxon>
        <taxon>Euarchontoglires</taxon>
        <taxon>Primates</taxon>
        <taxon>Haplorrhini</taxon>
        <taxon>Catarrhini</taxon>
        <taxon>Hominidae</taxon>
        <taxon>Pan</taxon>
    </lineage>
</organism>
<keyword id="KW-0007">Acetylation</keyword>
<keyword id="KW-0963">Cytoplasm</keyword>
<keyword id="KW-0206">Cytoskeleton</keyword>
<keyword id="KW-0342">GTP-binding</keyword>
<keyword id="KW-0378">Hydrolase</keyword>
<keyword id="KW-1017">Isopeptide bond</keyword>
<keyword id="KW-0460">Magnesium</keyword>
<keyword id="KW-0479">Metal-binding</keyword>
<keyword id="KW-0488">Methylation</keyword>
<keyword id="KW-0493">Microtubule</keyword>
<keyword id="KW-0944">Nitration</keyword>
<keyword id="KW-0547">Nucleotide-binding</keyword>
<keyword id="KW-0597">Phosphoprotein</keyword>
<keyword id="KW-1185">Reference proteome</keyword>
<keyword id="KW-0832">Ubl conjugation</keyword>
<evidence type="ECO:0000250" key="1"/>
<evidence type="ECO:0000250" key="2">
    <source>
        <dbReference type="UniProtKB" id="P05213"/>
    </source>
</evidence>
<evidence type="ECO:0000250" key="3">
    <source>
        <dbReference type="UniProtKB" id="P68363"/>
    </source>
</evidence>
<evidence type="ECO:0000250" key="4">
    <source>
        <dbReference type="UniProtKB" id="P68369"/>
    </source>
</evidence>
<evidence type="ECO:0000250" key="5">
    <source>
        <dbReference type="UniProtKB" id="P68373"/>
    </source>
</evidence>
<evidence type="ECO:0000250" key="6">
    <source>
        <dbReference type="UniProtKB" id="Q71U36"/>
    </source>
</evidence>
<evidence type="ECO:0000305" key="7"/>
<gene>
    <name type="primary">TUBA1B</name>
</gene>
<reference key="1">
    <citation type="submission" date="2004-08" db="EMBL/GenBank/DDBJ databases">
        <authorList>
            <person name="Hirai M."/>
            <person name="Sakate R."/>
            <person name="Hida M."/>
            <person name="Sugano S."/>
            <person name="Hayasaka I."/>
            <person name="Suto Y."/>
            <person name="Osada N."/>
            <person name="Hashimoto K."/>
        </authorList>
    </citation>
    <scope>NUCLEOTIDE SEQUENCE [MRNA]</scope>
    <source>
        <tissue>Skin</tissue>
    </source>
</reference>
<comment type="function">
    <text evidence="3">Tubulin is the major constituent of microtubules, protein filaments consisting of alpha- and beta-tubulin heterodimers (By similarity). Microtubules grow by the addition of GTP-tubulin dimers to the microtubule end, where a stabilizing cap forms (By similarity). Below the cap, tubulin dimers are in GDP-bound state, owing to GTPase activity of alpha-tubulin (By similarity).</text>
</comment>
<comment type="catalytic activity">
    <reaction evidence="3">
        <text>GTP + H2O = GDP + phosphate + H(+)</text>
        <dbReference type="Rhea" id="RHEA:19669"/>
        <dbReference type="ChEBI" id="CHEBI:15377"/>
        <dbReference type="ChEBI" id="CHEBI:15378"/>
        <dbReference type="ChEBI" id="CHEBI:37565"/>
        <dbReference type="ChEBI" id="CHEBI:43474"/>
        <dbReference type="ChEBI" id="CHEBI:58189"/>
    </reaction>
    <physiologicalReaction direction="left-to-right" evidence="3">
        <dbReference type="Rhea" id="RHEA:19670"/>
    </physiologicalReaction>
</comment>
<comment type="cofactor">
    <cofactor evidence="3">
        <name>Mg(2+)</name>
        <dbReference type="ChEBI" id="CHEBI:18420"/>
    </cofactor>
</comment>
<comment type="subunit">
    <text evidence="3">Heterodimer of alpha- and beta-tubulin (By similarity). A typical microtubule is a hollow water-filled tube with an outer diameter of 25 nm and an inner diameter of 15 nM (By similarity). Alpha-beta heterodimers associate head-to-tail to form protofilaments running lengthwise along the microtubule wall with the beta-tubulin subunit facing the microtubule plus end conferring a structural polarity (By similarity). Microtubules usually have 13 protofilaments but different protofilament numbers can be found in some organisms and specialized cells (By similarity). Interacts with gamma-tubulin; the interaction allows microtubules to nucleate from the gamma-tubulin ring complex (gTuRC) (By similarity). Nascent microtubule interacts (via alpha-tubulin MREC motif) with TTC5/STRAP; this interaction may result in tubulin mRNA-targeted degradation (By similarity). Component of sperm flagellar doublet microtubules (By similarity).</text>
</comment>
<comment type="subcellular location">
    <subcellularLocation>
        <location>Cytoplasm</location>
        <location>Cytoskeleton</location>
    </subcellularLocation>
</comment>
<comment type="domain">
    <text evidence="3">The MREC motif mediates interaction with TTC5/STRAP and may be critical for tubulin autoregulation.</text>
</comment>
<comment type="PTM">
    <text evidence="2">Some glutamate residues at the C-terminus are polyglycylated, resulting in polyglycine chains on the gamma-carboxyl group. Glycylation is mainly limited to tubulin incorporated into axonemes (cilia and flagella) whereas glutamylation is prevalent in neuronal cells, centrioles, axonemes, and the mitotic spindle. Both modifications can coexist on the same protein on adjacent residues, and lowering polyglycylation levels increases polyglutamylation, and reciprocally. Cilia and flagella glycylation is required for their stability and maintenance. Flagella glycylation controls sperm motility.</text>
</comment>
<comment type="PTM">
    <text evidence="2 6">Some glutamate residues at the C-terminus are polyglutamylated, resulting in polyglutamate chains on the gamma-carboxyl group (By similarity). Polyglutamylation plays a key role in microtubule severing by spastin (SPAST). SPAST preferentially recognizes and acts on microtubules decorated with short polyglutamate tails: severing activity by SPAST increases as the number of glutamates per tubulin rises from one to eight, but decreases beyond this glutamylation threshold (By similarity). Glutamylation is also involved in cilia motility (By similarity).</text>
</comment>
<comment type="PTM">
    <text evidence="6">Acetylation of alpha chains at Lys-40 is located inside the microtubule lumen. This modification has been correlated with increased microtubule stability, intracellular transport and ciliary assembly.</text>
</comment>
<comment type="PTM">
    <text evidence="3">Methylation of alpha chains at Lys-40 is found in mitotic microtubules and is required for normal mitosis and cytokinesis contributing to genomic stability.</text>
</comment>
<comment type="PTM">
    <text evidence="6">Nitration of Tyr-451 is irreversible and interferes with normal dynein intracellular distribution.</text>
</comment>
<comment type="PTM">
    <text evidence="4 6">Undergoes a tyrosination/detyrosination cycle, the cyclic removal and re-addition of a C-terminal tyrosine residue by the enzymes tubulin tyrosine carboxypeptidase (MATCAP1, VASH1 or VASH2) and tubulin tyrosine ligase (TTL), respectively.</text>
</comment>
<comment type="PTM">
    <molecule>Tubulin alpha-1B chain</molecule>
    <text evidence="4 6">Tyrosination promotes microtubule interaction with CAP-Gly domain-containing proteins such as CLIP1, CLIP2 and DCTN1 (By similarity). Tyrosination regulates the initiation of dynein-dynactin motility via interaction with DCTN1, which brings the dynein-dynactin complex into contact with microtubules. In neurons, tyrosinated tubulins mediate the initiation of retrograde vesicle transport (By similarity).</text>
</comment>
<comment type="PTM">
    <molecule>Detyrosinated tubulin alpha-1B chain</molecule>
    <text evidence="2 3">Detyrosination is involved in metaphase plate congression by guiding chromosomes during mitosis: detyrosination promotes interaction with CENPE, promoting pole-proximal transport of chromosomes toward the equator (By similarity). Detyrosination increases microtubules-dependent mechanotransduction in dystrophic cardiac and skeletal muscle. In cardiomyocytes, detyrosinated microtubules are required to resist to contractile compression during contraction: detyrosination promotes association with desmin (DES) at force-generating sarcomeres, leading to buckled microtubules and mechanical resistance to contraction (By similarity).</text>
</comment>
<comment type="similarity">
    <text evidence="7">Belongs to the tubulin family.</text>
</comment>
<feature type="chain" id="PRO_0000048109" description="Tubulin alpha-1B chain">
    <location>
        <begin position="1"/>
        <end position="451"/>
    </location>
</feature>
<feature type="chain" id="PRO_0000437388" description="Detyrosinated tubulin alpha-1B chain" evidence="3">
    <location>
        <begin position="1"/>
        <end position="450"/>
    </location>
</feature>
<feature type="short sequence motif" description="MREC motif" evidence="3">
    <location>
        <begin position="1"/>
        <end position="4"/>
    </location>
</feature>
<feature type="active site" evidence="3">
    <location>
        <position position="254"/>
    </location>
</feature>
<feature type="binding site" evidence="3">
    <location>
        <position position="10"/>
    </location>
    <ligand>
        <name>GTP</name>
        <dbReference type="ChEBI" id="CHEBI:37565"/>
    </ligand>
</feature>
<feature type="binding site" evidence="3">
    <location>
        <position position="11"/>
    </location>
    <ligand>
        <name>GTP</name>
        <dbReference type="ChEBI" id="CHEBI:37565"/>
    </ligand>
</feature>
<feature type="binding site" evidence="3">
    <location>
        <position position="12"/>
    </location>
    <ligand>
        <name>GTP</name>
        <dbReference type="ChEBI" id="CHEBI:37565"/>
    </ligand>
</feature>
<feature type="binding site" evidence="3">
    <location>
        <position position="15"/>
    </location>
    <ligand>
        <name>GTP</name>
        <dbReference type="ChEBI" id="CHEBI:37565"/>
    </ligand>
</feature>
<feature type="binding site" evidence="3">
    <location>
        <position position="71"/>
    </location>
    <ligand>
        <name>GTP</name>
        <dbReference type="ChEBI" id="CHEBI:37565"/>
    </ligand>
</feature>
<feature type="binding site" evidence="3">
    <location>
        <position position="71"/>
    </location>
    <ligand>
        <name>Mg(2+)</name>
        <dbReference type="ChEBI" id="CHEBI:18420"/>
    </ligand>
</feature>
<feature type="binding site" evidence="3">
    <location>
        <position position="99"/>
    </location>
    <ligand>
        <name>GTP</name>
        <dbReference type="ChEBI" id="CHEBI:37565"/>
    </ligand>
</feature>
<feature type="binding site" evidence="3">
    <location>
        <position position="140"/>
    </location>
    <ligand>
        <name>GTP</name>
        <dbReference type="ChEBI" id="CHEBI:37565"/>
    </ligand>
</feature>
<feature type="binding site" evidence="3">
    <location>
        <position position="143"/>
    </location>
    <ligand>
        <name>GTP</name>
        <dbReference type="ChEBI" id="CHEBI:37565"/>
    </ligand>
</feature>
<feature type="binding site" evidence="3">
    <location>
        <position position="144"/>
    </location>
    <ligand>
        <name>GTP</name>
        <dbReference type="ChEBI" id="CHEBI:37565"/>
    </ligand>
</feature>
<feature type="binding site" evidence="3">
    <location>
        <position position="145"/>
    </location>
    <ligand>
        <name>GTP</name>
        <dbReference type="ChEBI" id="CHEBI:37565"/>
    </ligand>
</feature>
<feature type="binding site" evidence="3">
    <location>
        <position position="146"/>
    </location>
    <ligand>
        <name>GTP</name>
        <dbReference type="ChEBI" id="CHEBI:37565"/>
    </ligand>
</feature>
<feature type="binding site" evidence="3">
    <location>
        <position position="179"/>
    </location>
    <ligand>
        <name>GTP</name>
        <dbReference type="ChEBI" id="CHEBI:37565"/>
    </ligand>
</feature>
<feature type="binding site" evidence="3">
    <location>
        <position position="183"/>
    </location>
    <ligand>
        <name>GTP</name>
        <dbReference type="ChEBI" id="CHEBI:37565"/>
    </ligand>
</feature>
<feature type="binding site" evidence="3">
    <location>
        <position position="206"/>
    </location>
    <ligand>
        <name>GTP</name>
        <dbReference type="ChEBI" id="CHEBI:37565"/>
    </ligand>
</feature>
<feature type="binding site" evidence="3">
    <location>
        <position position="224"/>
    </location>
    <ligand>
        <name>GTP</name>
        <dbReference type="ChEBI" id="CHEBI:37565"/>
    </ligand>
</feature>
<feature type="binding site" evidence="3">
    <location>
        <position position="228"/>
    </location>
    <ligand>
        <name>GTP</name>
        <dbReference type="ChEBI" id="CHEBI:37565"/>
    </ligand>
</feature>
<feature type="binding site" evidence="3">
    <location>
        <position position="252"/>
    </location>
    <ligand>
        <name>GTP</name>
        <dbReference type="ChEBI" id="CHEBI:37565"/>
    </ligand>
</feature>
<feature type="site" description="Involved in polymerization" evidence="1">
    <location>
        <position position="451"/>
    </location>
</feature>
<feature type="modified residue" description="N6,N6,N6-trimethyllysine; alternate" evidence="3">
    <location>
        <position position="40"/>
    </location>
</feature>
<feature type="modified residue" description="N6-acetyllysine; alternate" evidence="3">
    <location>
        <position position="40"/>
    </location>
</feature>
<feature type="modified residue" description="Phosphoserine" evidence="3">
    <location>
        <position position="48"/>
    </location>
</feature>
<feature type="modified residue" description="Phosphoserine" evidence="3">
    <location>
        <position position="232"/>
    </location>
</feature>
<feature type="modified residue" description="3'-nitrotyrosine" evidence="5">
    <location>
        <position position="282"/>
    </location>
</feature>
<feature type="modified residue" description="Omega-N-methylarginine" evidence="3">
    <location>
        <position position="339"/>
    </location>
</feature>
<feature type="modified residue" description="Phosphoserine" evidence="5">
    <location>
        <position position="439"/>
    </location>
</feature>
<feature type="modified residue" description="5-glutamyl polyglutamate" evidence="3">
    <location>
        <position position="443"/>
    </location>
</feature>
<feature type="modified residue" description="5-glutamyl polyglutamate" evidence="4">
    <location>
        <position position="445"/>
    </location>
</feature>
<feature type="modified residue" description="3'-nitrotyrosine" evidence="6">
    <location>
        <position position="451"/>
    </location>
</feature>
<feature type="cross-link" description="Glycyl lysine isopeptide (Lys-Gly) (interchain with G-Cter in ubiquitin)" evidence="3">
    <location>
        <position position="326"/>
    </location>
</feature>
<feature type="cross-link" description="Glycyl lysine isopeptide (Lys-Gly) (interchain with G-Cter in ubiquitin)" evidence="3">
    <location>
        <position position="370"/>
    </location>
</feature>
<proteinExistence type="evidence at transcript level"/>
<dbReference type="EC" id="3.6.5.-" evidence="3"/>
<dbReference type="EMBL" id="AB188283">
    <property type="protein sequence ID" value="BAD74034.1"/>
    <property type="molecule type" value="mRNA"/>
</dbReference>
<dbReference type="RefSeq" id="NP_001029267.1">
    <property type="nucleotide sequence ID" value="NM_001034095.1"/>
</dbReference>
<dbReference type="SMR" id="Q5R1W4"/>
<dbReference type="GeneID" id="452423"/>
<dbReference type="KEGG" id="ptr:452423"/>
<dbReference type="CTD" id="10376"/>
<dbReference type="InParanoid" id="Q5R1W4"/>
<dbReference type="OrthoDB" id="5086at9604"/>
<dbReference type="Proteomes" id="UP000002277">
    <property type="component" value="Unplaced"/>
</dbReference>
<dbReference type="GO" id="GO:0005737">
    <property type="term" value="C:cytoplasm"/>
    <property type="evidence" value="ECO:0000318"/>
    <property type="project" value="GO_Central"/>
</dbReference>
<dbReference type="GO" id="GO:0005874">
    <property type="term" value="C:microtubule"/>
    <property type="evidence" value="ECO:0000318"/>
    <property type="project" value="GO_Central"/>
</dbReference>
<dbReference type="GO" id="GO:0015630">
    <property type="term" value="C:microtubule cytoskeleton"/>
    <property type="evidence" value="ECO:0000250"/>
    <property type="project" value="UniProtKB"/>
</dbReference>
<dbReference type="GO" id="GO:0005525">
    <property type="term" value="F:GTP binding"/>
    <property type="evidence" value="ECO:0000250"/>
    <property type="project" value="UniProtKB"/>
</dbReference>
<dbReference type="GO" id="GO:0003924">
    <property type="term" value="F:GTPase activity"/>
    <property type="evidence" value="ECO:0000250"/>
    <property type="project" value="UniProtKB"/>
</dbReference>
<dbReference type="GO" id="GO:0046872">
    <property type="term" value="F:metal ion binding"/>
    <property type="evidence" value="ECO:0007669"/>
    <property type="project" value="UniProtKB-KW"/>
</dbReference>
<dbReference type="GO" id="GO:0005200">
    <property type="term" value="F:structural constituent of cytoskeleton"/>
    <property type="evidence" value="ECO:0000250"/>
    <property type="project" value="UniProtKB"/>
</dbReference>
<dbReference type="GO" id="GO:0000226">
    <property type="term" value="P:microtubule cytoskeleton organization"/>
    <property type="evidence" value="ECO:0000250"/>
    <property type="project" value="UniProtKB"/>
</dbReference>
<dbReference type="GO" id="GO:0000278">
    <property type="term" value="P:mitotic cell cycle"/>
    <property type="evidence" value="ECO:0000318"/>
    <property type="project" value="GO_Central"/>
</dbReference>
<dbReference type="CDD" id="cd02186">
    <property type="entry name" value="alpha_tubulin"/>
    <property type="match status" value="1"/>
</dbReference>
<dbReference type="FunFam" id="1.10.287.600:FF:000005">
    <property type="entry name" value="Tubulin alpha chain"/>
    <property type="match status" value="1"/>
</dbReference>
<dbReference type="FunFam" id="3.30.1330.20:FF:000001">
    <property type="entry name" value="Tubulin alpha chain"/>
    <property type="match status" value="1"/>
</dbReference>
<dbReference type="FunFam" id="3.40.50.1440:FF:000002">
    <property type="entry name" value="Tubulin alpha chain"/>
    <property type="match status" value="1"/>
</dbReference>
<dbReference type="Gene3D" id="1.10.287.600">
    <property type="entry name" value="Helix hairpin bin"/>
    <property type="match status" value="1"/>
</dbReference>
<dbReference type="Gene3D" id="3.30.1330.20">
    <property type="entry name" value="Tubulin/FtsZ, C-terminal domain"/>
    <property type="match status" value="1"/>
</dbReference>
<dbReference type="Gene3D" id="3.40.50.1440">
    <property type="entry name" value="Tubulin/FtsZ, GTPase domain"/>
    <property type="match status" value="1"/>
</dbReference>
<dbReference type="InterPro" id="IPR002452">
    <property type="entry name" value="Alpha_tubulin"/>
</dbReference>
<dbReference type="InterPro" id="IPR008280">
    <property type="entry name" value="Tub_FtsZ_C"/>
</dbReference>
<dbReference type="InterPro" id="IPR000217">
    <property type="entry name" value="Tubulin"/>
</dbReference>
<dbReference type="InterPro" id="IPR037103">
    <property type="entry name" value="Tubulin/FtsZ-like_C"/>
</dbReference>
<dbReference type="InterPro" id="IPR018316">
    <property type="entry name" value="Tubulin/FtsZ_2-layer-sand-dom"/>
</dbReference>
<dbReference type="InterPro" id="IPR036525">
    <property type="entry name" value="Tubulin/FtsZ_GTPase_sf"/>
</dbReference>
<dbReference type="InterPro" id="IPR023123">
    <property type="entry name" value="Tubulin_C"/>
</dbReference>
<dbReference type="InterPro" id="IPR017975">
    <property type="entry name" value="Tubulin_CS"/>
</dbReference>
<dbReference type="InterPro" id="IPR003008">
    <property type="entry name" value="Tubulin_FtsZ_GTPase"/>
</dbReference>
<dbReference type="PANTHER" id="PTHR11588">
    <property type="entry name" value="TUBULIN"/>
    <property type="match status" value="1"/>
</dbReference>
<dbReference type="Pfam" id="PF00091">
    <property type="entry name" value="Tubulin"/>
    <property type="match status" value="1"/>
</dbReference>
<dbReference type="Pfam" id="PF03953">
    <property type="entry name" value="Tubulin_C"/>
    <property type="match status" value="1"/>
</dbReference>
<dbReference type="PRINTS" id="PR01162">
    <property type="entry name" value="ALPHATUBULIN"/>
</dbReference>
<dbReference type="PRINTS" id="PR01161">
    <property type="entry name" value="TUBULIN"/>
</dbReference>
<dbReference type="SMART" id="SM00864">
    <property type="entry name" value="Tubulin"/>
    <property type="match status" value="1"/>
</dbReference>
<dbReference type="SMART" id="SM00865">
    <property type="entry name" value="Tubulin_C"/>
    <property type="match status" value="1"/>
</dbReference>
<dbReference type="SUPFAM" id="SSF55307">
    <property type="entry name" value="Tubulin C-terminal domain-like"/>
    <property type="match status" value="1"/>
</dbReference>
<dbReference type="SUPFAM" id="SSF52490">
    <property type="entry name" value="Tubulin nucleotide-binding domain-like"/>
    <property type="match status" value="1"/>
</dbReference>
<dbReference type="PROSITE" id="PS00227">
    <property type="entry name" value="TUBULIN"/>
    <property type="match status" value="1"/>
</dbReference>
<name>TBA1B_PANTR</name>